<dbReference type="EC" id="2.7.7.60" evidence="1"/>
<dbReference type="EMBL" id="CP000853">
    <property type="protein sequence ID" value="ABW18025.1"/>
    <property type="molecule type" value="Genomic_DNA"/>
</dbReference>
<dbReference type="RefSeq" id="WP_012158340.1">
    <property type="nucleotide sequence ID" value="NC_009922.1"/>
</dbReference>
<dbReference type="SMR" id="A8MLB1"/>
<dbReference type="STRING" id="350688.Clos_0463"/>
<dbReference type="KEGG" id="aoe:Clos_0463"/>
<dbReference type="eggNOG" id="COG1211">
    <property type="taxonomic scope" value="Bacteria"/>
</dbReference>
<dbReference type="HOGENOM" id="CLU_061281_2_2_9"/>
<dbReference type="OrthoDB" id="9806837at2"/>
<dbReference type="UniPathway" id="UPA00056">
    <property type="reaction ID" value="UER00093"/>
</dbReference>
<dbReference type="Proteomes" id="UP000000269">
    <property type="component" value="Chromosome"/>
</dbReference>
<dbReference type="GO" id="GO:0050518">
    <property type="term" value="F:2-C-methyl-D-erythritol 4-phosphate cytidylyltransferase activity"/>
    <property type="evidence" value="ECO:0007669"/>
    <property type="project" value="UniProtKB-UniRule"/>
</dbReference>
<dbReference type="GO" id="GO:0019288">
    <property type="term" value="P:isopentenyl diphosphate biosynthetic process, methylerythritol 4-phosphate pathway"/>
    <property type="evidence" value="ECO:0007669"/>
    <property type="project" value="UniProtKB-UniRule"/>
</dbReference>
<dbReference type="CDD" id="cd02516">
    <property type="entry name" value="CDP-ME_synthetase"/>
    <property type="match status" value="1"/>
</dbReference>
<dbReference type="FunFam" id="3.90.550.10:FF:000003">
    <property type="entry name" value="2-C-methyl-D-erythritol 4-phosphate cytidylyltransferase"/>
    <property type="match status" value="1"/>
</dbReference>
<dbReference type="Gene3D" id="3.90.550.10">
    <property type="entry name" value="Spore Coat Polysaccharide Biosynthesis Protein SpsA, Chain A"/>
    <property type="match status" value="1"/>
</dbReference>
<dbReference type="HAMAP" id="MF_00108">
    <property type="entry name" value="IspD"/>
    <property type="match status" value="1"/>
</dbReference>
<dbReference type="InterPro" id="IPR001228">
    <property type="entry name" value="IspD"/>
</dbReference>
<dbReference type="InterPro" id="IPR034683">
    <property type="entry name" value="IspD/TarI"/>
</dbReference>
<dbReference type="InterPro" id="IPR050088">
    <property type="entry name" value="IspD/TarI_cytidylyltransf_bact"/>
</dbReference>
<dbReference type="InterPro" id="IPR018294">
    <property type="entry name" value="ISPD_synthase_CS"/>
</dbReference>
<dbReference type="InterPro" id="IPR029044">
    <property type="entry name" value="Nucleotide-diphossugar_trans"/>
</dbReference>
<dbReference type="NCBIfam" id="TIGR00453">
    <property type="entry name" value="ispD"/>
    <property type="match status" value="1"/>
</dbReference>
<dbReference type="PANTHER" id="PTHR32125">
    <property type="entry name" value="2-C-METHYL-D-ERYTHRITOL 4-PHOSPHATE CYTIDYLYLTRANSFERASE, CHLOROPLASTIC"/>
    <property type="match status" value="1"/>
</dbReference>
<dbReference type="PANTHER" id="PTHR32125:SF4">
    <property type="entry name" value="2-C-METHYL-D-ERYTHRITOL 4-PHOSPHATE CYTIDYLYLTRANSFERASE, CHLOROPLASTIC"/>
    <property type="match status" value="1"/>
</dbReference>
<dbReference type="Pfam" id="PF01128">
    <property type="entry name" value="IspD"/>
    <property type="match status" value="1"/>
</dbReference>
<dbReference type="SUPFAM" id="SSF53448">
    <property type="entry name" value="Nucleotide-diphospho-sugar transferases"/>
    <property type="match status" value="1"/>
</dbReference>
<dbReference type="PROSITE" id="PS01295">
    <property type="entry name" value="ISPD"/>
    <property type="match status" value="1"/>
</dbReference>
<protein>
    <recommendedName>
        <fullName evidence="1">2-C-methyl-D-erythritol 4-phosphate cytidylyltransferase</fullName>
        <ecNumber evidence="1">2.7.7.60</ecNumber>
    </recommendedName>
    <alternativeName>
        <fullName evidence="1">4-diphosphocytidyl-2C-methyl-D-erythritol synthase</fullName>
    </alternativeName>
    <alternativeName>
        <fullName evidence="1">MEP cytidylyltransferase</fullName>
        <shortName evidence="1">MCT</shortName>
    </alternativeName>
</protein>
<gene>
    <name evidence="1" type="primary">ispD</name>
    <name type="ordered locus">Clos_0463</name>
</gene>
<comment type="function">
    <text evidence="1">Catalyzes the formation of 4-diphosphocytidyl-2-C-methyl-D-erythritol from CTP and 2-C-methyl-D-erythritol 4-phosphate (MEP).</text>
</comment>
<comment type="catalytic activity">
    <reaction evidence="1">
        <text>2-C-methyl-D-erythritol 4-phosphate + CTP + H(+) = 4-CDP-2-C-methyl-D-erythritol + diphosphate</text>
        <dbReference type="Rhea" id="RHEA:13429"/>
        <dbReference type="ChEBI" id="CHEBI:15378"/>
        <dbReference type="ChEBI" id="CHEBI:33019"/>
        <dbReference type="ChEBI" id="CHEBI:37563"/>
        <dbReference type="ChEBI" id="CHEBI:57823"/>
        <dbReference type="ChEBI" id="CHEBI:58262"/>
        <dbReference type="EC" id="2.7.7.60"/>
    </reaction>
</comment>
<comment type="pathway">
    <text evidence="1">Isoprenoid biosynthesis; isopentenyl diphosphate biosynthesis via DXP pathway; isopentenyl diphosphate from 1-deoxy-D-xylulose 5-phosphate: step 2/6.</text>
</comment>
<comment type="similarity">
    <text evidence="1">Belongs to the IspD/TarI cytidylyltransferase family. IspD subfamily.</text>
</comment>
<name>ISPD_ALKOO</name>
<proteinExistence type="inferred from homology"/>
<reference key="1">
    <citation type="submission" date="2007-10" db="EMBL/GenBank/DDBJ databases">
        <title>Complete genome of Alkaliphilus oremlandii OhILAs.</title>
        <authorList>
            <person name="Copeland A."/>
            <person name="Lucas S."/>
            <person name="Lapidus A."/>
            <person name="Barry K."/>
            <person name="Detter J.C."/>
            <person name="Glavina del Rio T."/>
            <person name="Hammon N."/>
            <person name="Israni S."/>
            <person name="Dalin E."/>
            <person name="Tice H."/>
            <person name="Pitluck S."/>
            <person name="Chain P."/>
            <person name="Malfatti S."/>
            <person name="Shin M."/>
            <person name="Vergez L."/>
            <person name="Schmutz J."/>
            <person name="Larimer F."/>
            <person name="Land M."/>
            <person name="Hauser L."/>
            <person name="Kyrpides N."/>
            <person name="Mikhailova N."/>
            <person name="Stolz J.F."/>
            <person name="Dawson A."/>
            <person name="Fisher E."/>
            <person name="Crable B."/>
            <person name="Perera E."/>
            <person name="Lisak J."/>
            <person name="Ranganathan M."/>
            <person name="Basu P."/>
            <person name="Richardson P."/>
        </authorList>
    </citation>
    <scope>NUCLEOTIDE SEQUENCE [LARGE SCALE GENOMIC DNA]</scope>
    <source>
        <strain>OhILAs</strain>
    </source>
</reference>
<organism>
    <name type="scientific">Alkaliphilus oremlandii (strain OhILAs)</name>
    <name type="common">Clostridium oremlandii (strain OhILAs)</name>
    <dbReference type="NCBI Taxonomy" id="350688"/>
    <lineage>
        <taxon>Bacteria</taxon>
        <taxon>Bacillati</taxon>
        <taxon>Bacillota</taxon>
        <taxon>Clostridia</taxon>
        <taxon>Peptostreptococcales</taxon>
        <taxon>Natronincolaceae</taxon>
        <taxon>Alkaliphilus</taxon>
    </lineage>
</organism>
<keyword id="KW-0414">Isoprene biosynthesis</keyword>
<keyword id="KW-0548">Nucleotidyltransferase</keyword>
<keyword id="KW-1185">Reference proteome</keyword>
<keyword id="KW-0808">Transferase</keyword>
<accession>A8MLB1</accession>
<evidence type="ECO:0000255" key="1">
    <source>
        <dbReference type="HAMAP-Rule" id="MF_00108"/>
    </source>
</evidence>
<sequence length="236" mass="26260">MENISKTSVIIVAAGKGKRMGRDYNKQYIQLEAQPIVAHTIKVFEEMDCINEIILVVGAGEVEFLKKSIIEVYGFQKVSAIVEGGLERRDSVYNGLKAVSQDCSIVLIHDGARPLITKDIIEESIIVAKESGACIAAVPVKDTIKISNDNMEVIHTPKRDNLWSVQTPQTFQYDLILEAYNHQQPKDSTATDDAMILEALGHTVKIIHGSYNNIKITTPEDLIVAEEILKTRREGR</sequence>
<feature type="chain" id="PRO_1000075927" description="2-C-methyl-D-erythritol 4-phosphate cytidylyltransferase">
    <location>
        <begin position="1"/>
        <end position="236"/>
    </location>
</feature>
<feature type="site" description="Transition state stabilizer" evidence="1">
    <location>
        <position position="19"/>
    </location>
</feature>
<feature type="site" description="Transition state stabilizer" evidence="1">
    <location>
        <position position="26"/>
    </location>
</feature>
<feature type="site" description="Positions MEP for the nucleophilic attack" evidence="1">
    <location>
        <position position="159"/>
    </location>
</feature>
<feature type="site" description="Positions MEP for the nucleophilic attack" evidence="1">
    <location>
        <position position="215"/>
    </location>
</feature>